<gene>
    <name type="primary">DEFB1</name>
</gene>
<proteinExistence type="inferred from homology"/>
<evidence type="ECO:0000250" key="1"/>
<evidence type="ECO:0000250" key="2">
    <source>
        <dbReference type="UniProtKB" id="P60022"/>
    </source>
</evidence>
<evidence type="ECO:0000255" key="3"/>
<evidence type="ECO:0000305" key="4"/>
<name>DEFB1_NOMCO</name>
<sequence length="68" mass="7535">MRTSYLLLFTLCLLLSEMASGDNFLTGLGHRSDHYNCVRSGGQCLYSACPIYTKIQGTCYQGKAKCCK</sequence>
<reference key="1">
    <citation type="journal article" date="2002" name="Immunogenetics">
        <title>Beta-defensin 1 gene variability among non-human primates.</title>
        <authorList>
            <person name="Del Pero M."/>
            <person name="Boniotto M."/>
            <person name="Zuccon D."/>
            <person name="Cervella P."/>
            <person name="Spano A."/>
            <person name="Amoroso A."/>
            <person name="Crovella S."/>
        </authorList>
    </citation>
    <scope>NUCLEOTIDE SEQUENCE [GENOMIC DNA]</scope>
</reference>
<feature type="signal peptide" evidence="3">
    <location>
        <begin position="1"/>
        <end position="21"/>
    </location>
</feature>
<feature type="propeptide" id="PRO_0000006901" evidence="1">
    <location>
        <begin position="22"/>
        <end position="32"/>
    </location>
</feature>
<feature type="peptide" id="PRO_0000006902" description="Beta-defensin 1">
    <location>
        <begin position="33"/>
        <end position="68"/>
    </location>
</feature>
<feature type="disulfide bond" evidence="1">
    <location>
        <begin position="37"/>
        <end position="66"/>
    </location>
</feature>
<feature type="disulfide bond" evidence="1">
    <location>
        <begin position="44"/>
        <end position="59"/>
    </location>
</feature>
<feature type="disulfide bond" evidence="1">
    <location>
        <begin position="49"/>
        <end position="67"/>
    </location>
</feature>
<dbReference type="EMBL" id="AY033752">
    <property type="protein sequence ID" value="AAK61464.1"/>
    <property type="molecule type" value="Genomic_DNA"/>
</dbReference>
<dbReference type="EMBL" id="AY033737">
    <property type="protein sequence ID" value="AAK61464.1"/>
    <property type="status" value="JOINED"/>
    <property type="molecule type" value="Genomic_DNA"/>
</dbReference>
<dbReference type="SMR" id="Q7JGM2"/>
<dbReference type="GO" id="GO:0005615">
    <property type="term" value="C:extracellular space"/>
    <property type="evidence" value="ECO:0007669"/>
    <property type="project" value="TreeGrafter"/>
</dbReference>
<dbReference type="GO" id="GO:0016020">
    <property type="term" value="C:membrane"/>
    <property type="evidence" value="ECO:0000250"/>
    <property type="project" value="UniProtKB"/>
</dbReference>
<dbReference type="GO" id="GO:1990742">
    <property type="term" value="C:microvesicle"/>
    <property type="evidence" value="ECO:0000250"/>
    <property type="project" value="UniProtKB"/>
</dbReference>
<dbReference type="GO" id="GO:0097225">
    <property type="term" value="C:sperm midpiece"/>
    <property type="evidence" value="ECO:0000250"/>
    <property type="project" value="UniProtKB"/>
</dbReference>
<dbReference type="GO" id="GO:0031731">
    <property type="term" value="F:CCR6 chemokine receptor binding"/>
    <property type="evidence" value="ECO:0000250"/>
    <property type="project" value="UniProtKB"/>
</dbReference>
<dbReference type="GO" id="GO:0042802">
    <property type="term" value="F:identical protein binding"/>
    <property type="evidence" value="ECO:0000250"/>
    <property type="project" value="UniProtKB"/>
</dbReference>
<dbReference type="GO" id="GO:0019722">
    <property type="term" value="P:calcium-mediated signaling"/>
    <property type="evidence" value="ECO:0000250"/>
    <property type="project" value="UniProtKB"/>
</dbReference>
<dbReference type="GO" id="GO:0050829">
    <property type="term" value="P:defense response to Gram-negative bacterium"/>
    <property type="evidence" value="ECO:0000250"/>
    <property type="project" value="UniProtKB"/>
</dbReference>
<dbReference type="GO" id="GO:0050830">
    <property type="term" value="P:defense response to Gram-positive bacterium"/>
    <property type="evidence" value="ECO:0000250"/>
    <property type="project" value="UniProtKB"/>
</dbReference>
<dbReference type="GO" id="GO:0002227">
    <property type="term" value="P:innate immune response in mucosa"/>
    <property type="evidence" value="ECO:0007669"/>
    <property type="project" value="TreeGrafter"/>
</dbReference>
<dbReference type="GO" id="GO:0060474">
    <property type="term" value="P:positive regulation of flagellated sperm motility involved in capacitation"/>
    <property type="evidence" value="ECO:0000250"/>
    <property type="project" value="UniProtKB"/>
</dbReference>
<dbReference type="FunFam" id="3.10.360.10:FF:000001">
    <property type="entry name" value="Beta-defensin 1"/>
    <property type="match status" value="1"/>
</dbReference>
<dbReference type="Gene3D" id="3.10.360.10">
    <property type="entry name" value="Antimicrobial Peptide, Beta-defensin 2, Chain A"/>
    <property type="match status" value="1"/>
</dbReference>
<dbReference type="InterPro" id="IPR001855">
    <property type="entry name" value="Defensin_beta-like"/>
</dbReference>
<dbReference type="PANTHER" id="PTHR21388:SF9">
    <property type="entry name" value="BETA-DEFENSIN 1"/>
    <property type="match status" value="1"/>
</dbReference>
<dbReference type="PANTHER" id="PTHR21388">
    <property type="entry name" value="BETA-DEFENSIN-RELATED"/>
    <property type="match status" value="1"/>
</dbReference>
<dbReference type="Pfam" id="PF00711">
    <property type="entry name" value="Defensin_beta"/>
    <property type="match status" value="1"/>
</dbReference>
<dbReference type="SUPFAM" id="SSF57392">
    <property type="entry name" value="Defensin-like"/>
    <property type="match status" value="1"/>
</dbReference>
<comment type="function">
    <text evidence="2">Has bactericidal activity. May act as a ligand for C-C chemokine receptor CCR6. Positively regulates the sperm motility and bactericidal activity in a CCR6-dependent manner. Binds to CCR6 and triggers Ca2+ mobilization in the sperm which is important for its motility.</text>
</comment>
<comment type="subunit">
    <text evidence="2">Monomer. Homodimer.</text>
</comment>
<comment type="subcellular location">
    <subcellularLocation>
        <location evidence="2">Secreted</location>
    </subcellularLocation>
    <subcellularLocation>
        <location evidence="2">Membrane</location>
    </subcellularLocation>
    <text evidence="2">Associates with tumor cell membrane-derived microvesicles.</text>
</comment>
<comment type="similarity">
    <text evidence="4">Belongs to the beta-defensin family.</text>
</comment>
<protein>
    <recommendedName>
        <fullName>Beta-defensin 1</fullName>
        <shortName>BD-1</shortName>
    </recommendedName>
    <alternativeName>
        <fullName>Defensin, beta 1</fullName>
    </alternativeName>
</protein>
<organism>
    <name type="scientific">Nomascus concolor</name>
    <name type="common">Black crested gibbon</name>
    <name type="synonym">Hylobates concolor</name>
    <dbReference type="NCBI Taxonomy" id="29089"/>
    <lineage>
        <taxon>Eukaryota</taxon>
        <taxon>Metazoa</taxon>
        <taxon>Chordata</taxon>
        <taxon>Craniata</taxon>
        <taxon>Vertebrata</taxon>
        <taxon>Euteleostomi</taxon>
        <taxon>Mammalia</taxon>
        <taxon>Eutheria</taxon>
        <taxon>Euarchontoglires</taxon>
        <taxon>Primates</taxon>
        <taxon>Haplorrhini</taxon>
        <taxon>Catarrhini</taxon>
        <taxon>Hylobatidae</taxon>
        <taxon>Nomascus</taxon>
    </lineage>
</organism>
<accession>Q7JGM2</accession>
<keyword id="KW-0044">Antibiotic</keyword>
<keyword id="KW-0929">Antimicrobial</keyword>
<keyword id="KW-0211">Defensin</keyword>
<keyword id="KW-1015">Disulfide bond</keyword>
<keyword id="KW-0472">Membrane</keyword>
<keyword id="KW-0964">Secreted</keyword>
<keyword id="KW-0732">Signal</keyword>